<dbReference type="EMBL" id="CP001616">
    <property type="protein sequence ID" value="ACQ94407.1"/>
    <property type="molecule type" value="Genomic_DNA"/>
</dbReference>
<dbReference type="RefSeq" id="WP_015879856.1">
    <property type="nucleotide sequence ID" value="NC_012691.1"/>
</dbReference>
<dbReference type="SMR" id="C4LCA3"/>
<dbReference type="STRING" id="595494.Tola_2814"/>
<dbReference type="KEGG" id="tau:Tola_2814"/>
<dbReference type="eggNOG" id="COG0234">
    <property type="taxonomic scope" value="Bacteria"/>
</dbReference>
<dbReference type="HOGENOM" id="CLU_132825_1_1_6"/>
<dbReference type="OrthoDB" id="9806791at2"/>
<dbReference type="Proteomes" id="UP000009073">
    <property type="component" value="Chromosome"/>
</dbReference>
<dbReference type="GO" id="GO:0005737">
    <property type="term" value="C:cytoplasm"/>
    <property type="evidence" value="ECO:0007669"/>
    <property type="project" value="UniProtKB-SubCell"/>
</dbReference>
<dbReference type="GO" id="GO:0005524">
    <property type="term" value="F:ATP binding"/>
    <property type="evidence" value="ECO:0007669"/>
    <property type="project" value="InterPro"/>
</dbReference>
<dbReference type="GO" id="GO:0046872">
    <property type="term" value="F:metal ion binding"/>
    <property type="evidence" value="ECO:0007669"/>
    <property type="project" value="TreeGrafter"/>
</dbReference>
<dbReference type="GO" id="GO:0044183">
    <property type="term" value="F:protein folding chaperone"/>
    <property type="evidence" value="ECO:0007669"/>
    <property type="project" value="InterPro"/>
</dbReference>
<dbReference type="GO" id="GO:0051087">
    <property type="term" value="F:protein-folding chaperone binding"/>
    <property type="evidence" value="ECO:0007669"/>
    <property type="project" value="TreeGrafter"/>
</dbReference>
<dbReference type="GO" id="GO:0051082">
    <property type="term" value="F:unfolded protein binding"/>
    <property type="evidence" value="ECO:0007669"/>
    <property type="project" value="TreeGrafter"/>
</dbReference>
<dbReference type="GO" id="GO:0051085">
    <property type="term" value="P:chaperone cofactor-dependent protein refolding"/>
    <property type="evidence" value="ECO:0007669"/>
    <property type="project" value="TreeGrafter"/>
</dbReference>
<dbReference type="CDD" id="cd00320">
    <property type="entry name" value="cpn10"/>
    <property type="match status" value="1"/>
</dbReference>
<dbReference type="FunFam" id="2.30.33.40:FF:000001">
    <property type="entry name" value="10 kDa chaperonin"/>
    <property type="match status" value="1"/>
</dbReference>
<dbReference type="Gene3D" id="2.30.33.40">
    <property type="entry name" value="GroES chaperonin"/>
    <property type="match status" value="1"/>
</dbReference>
<dbReference type="HAMAP" id="MF_00580">
    <property type="entry name" value="CH10"/>
    <property type="match status" value="1"/>
</dbReference>
<dbReference type="InterPro" id="IPR020818">
    <property type="entry name" value="Chaperonin_GroES"/>
</dbReference>
<dbReference type="InterPro" id="IPR037124">
    <property type="entry name" value="Chaperonin_GroES_sf"/>
</dbReference>
<dbReference type="InterPro" id="IPR018369">
    <property type="entry name" value="Chaprnonin_Cpn10_CS"/>
</dbReference>
<dbReference type="InterPro" id="IPR011032">
    <property type="entry name" value="GroES-like_sf"/>
</dbReference>
<dbReference type="NCBIfam" id="NF001526">
    <property type="entry name" value="PRK00364.1-1"/>
    <property type="match status" value="1"/>
</dbReference>
<dbReference type="NCBIfam" id="NF001527">
    <property type="entry name" value="PRK00364.1-2"/>
    <property type="match status" value="1"/>
</dbReference>
<dbReference type="NCBIfam" id="NF001531">
    <property type="entry name" value="PRK00364.2-2"/>
    <property type="match status" value="1"/>
</dbReference>
<dbReference type="PANTHER" id="PTHR10772">
    <property type="entry name" value="10 KDA HEAT SHOCK PROTEIN"/>
    <property type="match status" value="1"/>
</dbReference>
<dbReference type="PANTHER" id="PTHR10772:SF58">
    <property type="entry name" value="CO-CHAPERONIN GROES"/>
    <property type="match status" value="1"/>
</dbReference>
<dbReference type="Pfam" id="PF00166">
    <property type="entry name" value="Cpn10"/>
    <property type="match status" value="1"/>
</dbReference>
<dbReference type="PRINTS" id="PR00297">
    <property type="entry name" value="CHAPERONIN10"/>
</dbReference>
<dbReference type="SMART" id="SM00883">
    <property type="entry name" value="Cpn10"/>
    <property type="match status" value="1"/>
</dbReference>
<dbReference type="SUPFAM" id="SSF50129">
    <property type="entry name" value="GroES-like"/>
    <property type="match status" value="1"/>
</dbReference>
<dbReference type="PROSITE" id="PS00681">
    <property type="entry name" value="CHAPERONINS_CPN10"/>
    <property type="match status" value="1"/>
</dbReference>
<reference key="1">
    <citation type="submission" date="2009-05" db="EMBL/GenBank/DDBJ databases">
        <title>Complete sequence of Tolumonas auensis DSM 9187.</title>
        <authorList>
            <consortium name="US DOE Joint Genome Institute"/>
            <person name="Lucas S."/>
            <person name="Copeland A."/>
            <person name="Lapidus A."/>
            <person name="Glavina del Rio T."/>
            <person name="Tice H."/>
            <person name="Bruce D."/>
            <person name="Goodwin L."/>
            <person name="Pitluck S."/>
            <person name="Chertkov O."/>
            <person name="Brettin T."/>
            <person name="Detter J.C."/>
            <person name="Han C."/>
            <person name="Larimer F."/>
            <person name="Land M."/>
            <person name="Hauser L."/>
            <person name="Kyrpides N."/>
            <person name="Mikhailova N."/>
            <person name="Spring S."/>
            <person name="Beller H."/>
        </authorList>
    </citation>
    <scope>NUCLEOTIDE SEQUENCE [LARGE SCALE GENOMIC DNA]</scope>
    <source>
        <strain>DSM 9187 / NBRC 110442 / TA 4</strain>
    </source>
</reference>
<proteinExistence type="inferred from homology"/>
<gene>
    <name evidence="1" type="primary">groES</name>
    <name evidence="1" type="synonym">groS</name>
    <name type="ordered locus">Tola_2814</name>
</gene>
<feature type="chain" id="PRO_1000212127" description="Co-chaperonin GroES">
    <location>
        <begin position="1"/>
        <end position="97"/>
    </location>
</feature>
<keyword id="KW-0143">Chaperone</keyword>
<keyword id="KW-0963">Cytoplasm</keyword>
<keyword id="KW-1185">Reference proteome</keyword>
<organism>
    <name type="scientific">Tolumonas auensis (strain DSM 9187 / NBRC 110442 / TA 4)</name>
    <dbReference type="NCBI Taxonomy" id="595494"/>
    <lineage>
        <taxon>Bacteria</taxon>
        <taxon>Pseudomonadati</taxon>
        <taxon>Pseudomonadota</taxon>
        <taxon>Gammaproteobacteria</taxon>
        <taxon>Aeromonadales</taxon>
        <taxon>Aeromonadaceae</taxon>
        <taxon>Tolumonas</taxon>
    </lineage>
</organism>
<name>CH10_TOLAT</name>
<evidence type="ECO:0000255" key="1">
    <source>
        <dbReference type="HAMAP-Rule" id="MF_00580"/>
    </source>
</evidence>
<sequence>MKIRPLHDRVIIKRTEVEAKSAGGIVLTGSAAQKSTRGEVLAVGTGRILDNGEVKALAVKVGDKVIFNEGYGVKTEKLDGQEVLILSETDILAIVEE</sequence>
<accession>C4LCA3</accession>
<comment type="function">
    <text evidence="1">Together with the chaperonin GroEL, plays an essential role in assisting protein folding. The GroEL-GroES system forms a nano-cage that allows encapsulation of the non-native substrate proteins and provides a physical environment optimized to promote and accelerate protein folding. GroES binds to the apical surface of the GroEL ring, thereby capping the opening of the GroEL channel.</text>
</comment>
<comment type="subunit">
    <text evidence="1">Heptamer of 7 subunits arranged in a ring. Interacts with the chaperonin GroEL.</text>
</comment>
<comment type="subcellular location">
    <subcellularLocation>
        <location evidence="1">Cytoplasm</location>
    </subcellularLocation>
</comment>
<comment type="similarity">
    <text evidence="1">Belongs to the GroES chaperonin family.</text>
</comment>
<protein>
    <recommendedName>
        <fullName evidence="1">Co-chaperonin GroES</fullName>
    </recommendedName>
    <alternativeName>
        <fullName evidence="1">10 kDa chaperonin</fullName>
    </alternativeName>
    <alternativeName>
        <fullName evidence="1">Chaperonin-10</fullName>
        <shortName evidence="1">Cpn10</shortName>
    </alternativeName>
</protein>